<name>MOTA_SALTY</name>
<evidence type="ECO:0000250" key="1"/>
<evidence type="ECO:0000255" key="2"/>
<evidence type="ECO:0000305" key="3"/>
<keyword id="KW-0997">Cell inner membrane</keyword>
<keyword id="KW-1003">Cell membrane</keyword>
<keyword id="KW-0145">Chemotaxis</keyword>
<keyword id="KW-0283">Flagellar rotation</keyword>
<keyword id="KW-0375">Hydrogen ion transport</keyword>
<keyword id="KW-0406">Ion transport</keyword>
<keyword id="KW-0472">Membrane</keyword>
<keyword id="KW-1185">Reference proteome</keyword>
<keyword id="KW-0812">Transmembrane</keyword>
<keyword id="KW-1133">Transmembrane helix</keyword>
<keyword id="KW-0813">Transport</keyword>
<organism>
    <name type="scientific">Salmonella typhimurium (strain LT2 / SGSC1412 / ATCC 700720)</name>
    <dbReference type="NCBI Taxonomy" id="99287"/>
    <lineage>
        <taxon>Bacteria</taxon>
        <taxon>Pseudomonadati</taxon>
        <taxon>Pseudomonadota</taxon>
        <taxon>Gammaproteobacteria</taxon>
        <taxon>Enterobacterales</taxon>
        <taxon>Enterobacteriaceae</taxon>
        <taxon>Salmonella</taxon>
    </lineage>
</organism>
<feature type="chain" id="PRO_0000189573" description="Motility protein A">
    <location>
        <begin position="1"/>
        <end position="295"/>
    </location>
</feature>
<feature type="transmembrane region" description="Helical" evidence="2">
    <location>
        <begin position="2"/>
        <end position="21"/>
    </location>
</feature>
<feature type="topological domain" description="Periplasmic" evidence="2">
    <location>
        <begin position="22"/>
        <end position="33"/>
    </location>
</feature>
<feature type="transmembrane region" description="Helical" evidence="2">
    <location>
        <begin position="34"/>
        <end position="51"/>
    </location>
</feature>
<feature type="topological domain" description="Cytoplasmic" evidence="2">
    <location>
        <begin position="52"/>
        <end position="170"/>
    </location>
</feature>
<feature type="transmembrane region" description="Helical" evidence="2">
    <location>
        <begin position="171"/>
        <end position="191"/>
    </location>
</feature>
<feature type="topological domain" description="Periplasmic" evidence="2">
    <location>
        <begin position="192"/>
        <end position="200"/>
    </location>
</feature>
<feature type="transmembrane region" description="Helical" evidence="2">
    <location>
        <begin position="201"/>
        <end position="222"/>
    </location>
</feature>
<feature type="topological domain" description="Cytoplasmic" evidence="2">
    <location>
        <begin position="223"/>
        <end position="295"/>
    </location>
</feature>
<protein>
    <recommendedName>
        <fullName>Motility protein A</fullName>
    </recommendedName>
    <alternativeName>
        <fullName>Chemotaxis protein MotA</fullName>
    </alternativeName>
</protein>
<proteinExistence type="inferred from homology"/>
<dbReference type="EMBL" id="U81861">
    <property type="protein sequence ID" value="AAC45265.1"/>
    <property type="molecule type" value="Genomic_DNA"/>
</dbReference>
<dbReference type="EMBL" id="D43640">
    <property type="protein sequence ID" value="BAA85316.1"/>
    <property type="molecule type" value="Genomic_DNA"/>
</dbReference>
<dbReference type="EMBL" id="AE006468">
    <property type="protein sequence ID" value="AAL20839.1"/>
    <property type="molecule type" value="Genomic_DNA"/>
</dbReference>
<dbReference type="RefSeq" id="NP_460880.1">
    <property type="nucleotide sequence ID" value="NC_003197.2"/>
</dbReference>
<dbReference type="RefSeq" id="WP_000906312.1">
    <property type="nucleotide sequence ID" value="NC_003197.2"/>
</dbReference>
<dbReference type="SMR" id="P55891"/>
<dbReference type="IntAct" id="P55891">
    <property type="interactions" value="1"/>
</dbReference>
<dbReference type="STRING" id="99287.STM1923"/>
<dbReference type="TCDB" id="1.A.30.1.7">
    <property type="family name" value="the h(+)- or na(+)-translocating bacterial flagellar motor/exbbd outer membrane transport energizer (mot/exb) superfamily"/>
</dbReference>
<dbReference type="PaxDb" id="99287-STM1923"/>
<dbReference type="GeneID" id="1253444"/>
<dbReference type="KEGG" id="stm:STM1923"/>
<dbReference type="PATRIC" id="fig|99287.12.peg.2040"/>
<dbReference type="HOGENOM" id="CLU_068213_0_0_6"/>
<dbReference type="OMA" id="KYTKARY"/>
<dbReference type="PhylomeDB" id="P55891"/>
<dbReference type="BioCyc" id="SENT99287:STM1923-MONOMER"/>
<dbReference type="PHI-base" id="PHI:8374"/>
<dbReference type="Proteomes" id="UP000001014">
    <property type="component" value="Chromosome"/>
</dbReference>
<dbReference type="GO" id="GO:0005886">
    <property type="term" value="C:plasma membrane"/>
    <property type="evidence" value="ECO:0000318"/>
    <property type="project" value="GO_Central"/>
</dbReference>
<dbReference type="GO" id="GO:0071978">
    <property type="term" value="P:bacterial-type flagellum-dependent swarming motility"/>
    <property type="evidence" value="ECO:0000318"/>
    <property type="project" value="GO_Central"/>
</dbReference>
<dbReference type="GO" id="GO:0006935">
    <property type="term" value="P:chemotaxis"/>
    <property type="evidence" value="ECO:0007669"/>
    <property type="project" value="UniProtKB-KW"/>
</dbReference>
<dbReference type="GO" id="GO:1902600">
    <property type="term" value="P:proton transmembrane transport"/>
    <property type="evidence" value="ECO:0007669"/>
    <property type="project" value="UniProtKB-KW"/>
</dbReference>
<dbReference type="InterPro" id="IPR000540">
    <property type="entry name" value="Flag_MotA_CS"/>
</dbReference>
<dbReference type="InterPro" id="IPR022522">
    <property type="entry name" value="Flagellar_motor_stator_MotA"/>
</dbReference>
<dbReference type="InterPro" id="IPR047055">
    <property type="entry name" value="MotA-like"/>
</dbReference>
<dbReference type="InterPro" id="IPR002898">
    <property type="entry name" value="MotA_ExbB_proton_chnl"/>
</dbReference>
<dbReference type="InterPro" id="IPR046786">
    <property type="entry name" value="MotA_N"/>
</dbReference>
<dbReference type="NCBIfam" id="TIGR03818">
    <property type="entry name" value="MotA1"/>
    <property type="match status" value="1"/>
</dbReference>
<dbReference type="PANTHER" id="PTHR30433">
    <property type="entry name" value="CHEMOTAXIS PROTEIN MOTA"/>
    <property type="match status" value="1"/>
</dbReference>
<dbReference type="PANTHER" id="PTHR30433:SF4">
    <property type="entry name" value="MOTILITY PROTEIN A"/>
    <property type="match status" value="1"/>
</dbReference>
<dbReference type="Pfam" id="PF01618">
    <property type="entry name" value="MotA_ExbB"/>
    <property type="match status" value="1"/>
</dbReference>
<dbReference type="Pfam" id="PF20560">
    <property type="entry name" value="MotA_N"/>
    <property type="match status" value="1"/>
</dbReference>
<dbReference type="PROSITE" id="PS01307">
    <property type="entry name" value="MOTA"/>
    <property type="match status" value="1"/>
</dbReference>
<gene>
    <name type="primary">motA</name>
    <name type="ordered locus">STM1923</name>
</gene>
<sequence>MLILLGYLVVIGTVFGGYVMTGGHLGALYQPAELVIIGGAGIGAFIVGNNGKAIKGTMKAIPLLFRRSKYTKSMYMDLLALLYRLMAKSRQQGMFSLERDIENPKESEIFASYPRILADAVMLDFIVDYLRLIISGNMNTFEIEALMDEEIETHESEAEVPANSLAMVGDSLPAFGIVAAVMGVVHALASADRPAAELGALIAHAMVGTFLGILLAYGFISPLATVLRQKSAETTKMMQCVKITLLSNLNGYAPPIAVEFGRKTLYSSERPSFIELEEHVRAVRNPNQQQTTEEA</sequence>
<accession>P55891</accession>
<comment type="function">
    <text evidence="1">MotA and MotB comprise the stator element of the flagellar motor complex. Required for rotation of the flagellar motor. Probable transmembrane proton channel (By similarity).</text>
</comment>
<comment type="subunit">
    <text evidence="1">Each stator complex is composed of 4 MotA and 2 MotB subunits. 2 A subunits and 1 B subunit are thought to form a single ion channel, so that each stator complex contains two channels (By similarity).</text>
</comment>
<comment type="subcellular location">
    <subcellularLocation>
        <location evidence="1">Cell inner membrane</location>
        <topology evidence="3">Multi-pass membrane protein</topology>
    </subcellularLocation>
</comment>
<comment type="similarity">
    <text evidence="3">Belongs to the MotA family.</text>
</comment>
<reference key="1">
    <citation type="journal article" date="1997" name="J. Bacteriol.">
        <title>An extreme clockwise switch bias mutation in fliG of Salmonella typhimurium and its suppression by slow-motile mutations in motA and motB.</title>
        <authorList>
            <person name="Togashi F."/>
            <person name="Yamaguchi S."/>
            <person name="Kihara M."/>
            <person name="Aizawa S."/>
            <person name="Macnab R.M."/>
        </authorList>
    </citation>
    <scope>NUCLEOTIDE SEQUENCE [GENOMIC DNA]</scope>
    <source>
        <strain>SJW1103</strain>
    </source>
</reference>
<reference key="2">
    <citation type="journal article" date="1999" name="Genes Genet. Syst.">
        <title>Structure and transcriptional control of the flagellar master operon of Salmonella typhimurium.</title>
        <authorList>
            <person name="Yanagihara S."/>
            <person name="Iyoda S."/>
            <person name="Ohnishi K."/>
            <person name="Iino T."/>
            <person name="Kutsukake K."/>
        </authorList>
    </citation>
    <scope>NUCLEOTIDE SEQUENCE [GENOMIC DNA]</scope>
</reference>
<reference key="3">
    <citation type="journal article" date="2001" name="Nature">
        <title>Complete genome sequence of Salmonella enterica serovar Typhimurium LT2.</title>
        <authorList>
            <person name="McClelland M."/>
            <person name="Sanderson K.E."/>
            <person name="Spieth J."/>
            <person name="Clifton S.W."/>
            <person name="Latreille P."/>
            <person name="Courtney L."/>
            <person name="Porwollik S."/>
            <person name="Ali J."/>
            <person name="Dante M."/>
            <person name="Du F."/>
            <person name="Hou S."/>
            <person name="Layman D."/>
            <person name="Leonard S."/>
            <person name="Nguyen C."/>
            <person name="Scott K."/>
            <person name="Holmes A."/>
            <person name="Grewal N."/>
            <person name="Mulvaney E."/>
            <person name="Ryan E."/>
            <person name="Sun H."/>
            <person name="Florea L."/>
            <person name="Miller W."/>
            <person name="Stoneking T."/>
            <person name="Nhan M."/>
            <person name="Waterston R."/>
            <person name="Wilson R.K."/>
        </authorList>
    </citation>
    <scope>NUCLEOTIDE SEQUENCE [LARGE SCALE GENOMIC DNA]</scope>
    <source>
        <strain>LT2 / SGSC1412 / ATCC 700720</strain>
    </source>
</reference>